<reference key="1">
    <citation type="journal article" date="2002" name="Proc. Natl. Acad. Sci. U.S.A.">
        <title>The Brucella suis genome reveals fundamental similarities between animal and plant pathogens and symbionts.</title>
        <authorList>
            <person name="Paulsen I.T."/>
            <person name="Seshadri R."/>
            <person name="Nelson K.E."/>
            <person name="Eisen J.A."/>
            <person name="Heidelberg J.F."/>
            <person name="Read T.D."/>
            <person name="Dodson R.J."/>
            <person name="Umayam L.A."/>
            <person name="Brinkac L.M."/>
            <person name="Beanan M.J."/>
            <person name="Daugherty S.C."/>
            <person name="DeBoy R.T."/>
            <person name="Durkin A.S."/>
            <person name="Kolonay J.F."/>
            <person name="Madupu R."/>
            <person name="Nelson W.C."/>
            <person name="Ayodeji B."/>
            <person name="Kraul M."/>
            <person name="Shetty J."/>
            <person name="Malek J.A."/>
            <person name="Van Aken S.E."/>
            <person name="Riedmuller S."/>
            <person name="Tettelin H."/>
            <person name="Gill S.R."/>
            <person name="White O."/>
            <person name="Salzberg S.L."/>
            <person name="Hoover D.L."/>
            <person name="Lindler L.E."/>
            <person name="Halling S.M."/>
            <person name="Boyle S.M."/>
            <person name="Fraser C.M."/>
        </authorList>
    </citation>
    <scope>NUCLEOTIDE SEQUENCE [LARGE SCALE GENOMIC DNA]</scope>
    <source>
        <strain>1330</strain>
    </source>
</reference>
<reference key="2">
    <citation type="journal article" date="2011" name="J. Bacteriol.">
        <title>Revised genome sequence of Brucella suis 1330.</title>
        <authorList>
            <person name="Tae H."/>
            <person name="Shallom S."/>
            <person name="Settlage R."/>
            <person name="Preston D."/>
            <person name="Adams L.G."/>
            <person name="Garner H.R."/>
        </authorList>
    </citation>
    <scope>NUCLEOTIDE SEQUENCE [LARGE SCALE GENOMIC DNA]</scope>
    <source>
        <strain>1330</strain>
    </source>
</reference>
<dbReference type="EMBL" id="AE014291">
    <property type="protein sequence ID" value="AAN30555.1"/>
    <property type="molecule type" value="Genomic_DNA"/>
</dbReference>
<dbReference type="EMBL" id="CP002997">
    <property type="protein sequence ID" value="AEM18972.1"/>
    <property type="molecule type" value="Genomic_DNA"/>
</dbReference>
<dbReference type="RefSeq" id="WP_004690444.1">
    <property type="nucleotide sequence ID" value="NZ_KN046804.1"/>
</dbReference>
<dbReference type="SMR" id="Q8FZ45"/>
<dbReference type="KEGG" id="bms:BR1654"/>
<dbReference type="KEGG" id="bsi:BS1330_I1648"/>
<dbReference type="PATRIC" id="fig|204722.21.peg.2918"/>
<dbReference type="HOGENOM" id="CLU_096072_3_2_5"/>
<dbReference type="Proteomes" id="UP000007104">
    <property type="component" value="Chromosome I"/>
</dbReference>
<dbReference type="GO" id="GO:0005829">
    <property type="term" value="C:cytosol"/>
    <property type="evidence" value="ECO:0007669"/>
    <property type="project" value="TreeGrafter"/>
</dbReference>
<dbReference type="GO" id="GO:0003700">
    <property type="term" value="F:DNA-binding transcription factor activity"/>
    <property type="evidence" value="ECO:0007669"/>
    <property type="project" value="InterPro"/>
</dbReference>
<dbReference type="GO" id="GO:0000976">
    <property type="term" value="F:transcription cis-regulatory region binding"/>
    <property type="evidence" value="ECO:0007669"/>
    <property type="project" value="TreeGrafter"/>
</dbReference>
<dbReference type="GO" id="GO:0008270">
    <property type="term" value="F:zinc ion binding"/>
    <property type="evidence" value="ECO:0007669"/>
    <property type="project" value="TreeGrafter"/>
</dbReference>
<dbReference type="GO" id="GO:0045892">
    <property type="term" value="P:negative regulation of DNA-templated transcription"/>
    <property type="evidence" value="ECO:0007669"/>
    <property type="project" value="TreeGrafter"/>
</dbReference>
<dbReference type="GO" id="GO:1900376">
    <property type="term" value="P:regulation of secondary metabolite biosynthetic process"/>
    <property type="evidence" value="ECO:0007669"/>
    <property type="project" value="TreeGrafter"/>
</dbReference>
<dbReference type="CDD" id="cd07153">
    <property type="entry name" value="Fur_like"/>
    <property type="match status" value="1"/>
</dbReference>
<dbReference type="Gene3D" id="3.30.1490.190">
    <property type="match status" value="1"/>
</dbReference>
<dbReference type="Gene3D" id="1.10.10.10">
    <property type="entry name" value="Winged helix-like DNA-binding domain superfamily/Winged helix DNA-binding domain"/>
    <property type="match status" value="1"/>
</dbReference>
<dbReference type="InterPro" id="IPR002481">
    <property type="entry name" value="FUR"/>
</dbReference>
<dbReference type="InterPro" id="IPR043135">
    <property type="entry name" value="Fur_C"/>
</dbReference>
<dbReference type="InterPro" id="IPR036388">
    <property type="entry name" value="WH-like_DNA-bd_sf"/>
</dbReference>
<dbReference type="InterPro" id="IPR036390">
    <property type="entry name" value="WH_DNA-bd_sf"/>
</dbReference>
<dbReference type="PANTHER" id="PTHR33202:SF2">
    <property type="entry name" value="FERRIC UPTAKE REGULATION PROTEIN"/>
    <property type="match status" value="1"/>
</dbReference>
<dbReference type="PANTHER" id="PTHR33202">
    <property type="entry name" value="ZINC UPTAKE REGULATION PROTEIN"/>
    <property type="match status" value="1"/>
</dbReference>
<dbReference type="Pfam" id="PF01475">
    <property type="entry name" value="FUR"/>
    <property type="match status" value="1"/>
</dbReference>
<dbReference type="SUPFAM" id="SSF46785">
    <property type="entry name" value="Winged helix' DNA-binding domain"/>
    <property type="match status" value="1"/>
</dbReference>
<gene>
    <name type="primary">fur</name>
    <name type="ordered locus">BR1654</name>
    <name type="ordered locus">BS1330_I1648</name>
</gene>
<proteinExistence type="inferred from homology"/>
<feature type="chain" id="PRO_0000095547" description="Ferric uptake regulation protein">
    <location>
        <begin position="1"/>
        <end position="141"/>
    </location>
</feature>
<feature type="region of interest" description="DNA-binding" evidence="1">
    <location>
        <begin position="1"/>
        <end position="89"/>
    </location>
</feature>
<feature type="region of interest" description="Dimerization" evidence="1">
    <location>
        <begin position="90"/>
        <end position="141"/>
    </location>
</feature>
<feature type="binding site" evidence="1">
    <location>
        <position position="38"/>
    </location>
    <ligand>
        <name>Zn(2+)</name>
        <dbReference type="ChEBI" id="CHEBI:29105"/>
    </ligand>
</feature>
<feature type="binding site" evidence="1">
    <location>
        <position position="86"/>
    </location>
    <ligand>
        <name>Zn(2+)</name>
        <dbReference type="ChEBI" id="CHEBI:29105"/>
    </ligand>
</feature>
<feature type="binding site" evidence="1">
    <location>
        <position position="92"/>
    </location>
    <ligand>
        <name>Fe cation</name>
        <dbReference type="ChEBI" id="CHEBI:24875"/>
    </ligand>
</feature>
<feature type="binding site" evidence="1">
    <location>
        <position position="94"/>
    </location>
    <ligand>
        <name>Fe cation</name>
        <dbReference type="ChEBI" id="CHEBI:24875"/>
    </ligand>
</feature>
<feature type="binding site" evidence="1">
    <location>
        <position position="95"/>
    </location>
    <ligand>
        <name>Zn(2+)</name>
        <dbReference type="ChEBI" id="CHEBI:29105"/>
    </ligand>
</feature>
<feature type="binding site" evidence="1">
    <location>
        <position position="106"/>
    </location>
    <ligand>
        <name>Zn(2+)</name>
        <dbReference type="ChEBI" id="CHEBI:29105"/>
    </ligand>
</feature>
<feature type="binding site" evidence="1">
    <location>
        <position position="113"/>
    </location>
    <ligand>
        <name>Fe cation</name>
        <dbReference type="ChEBI" id="CHEBI:24875"/>
    </ligand>
</feature>
<feature type="binding site" evidence="1">
    <location>
        <position position="130"/>
    </location>
    <ligand>
        <name>Fe cation</name>
        <dbReference type="ChEBI" id="CHEBI:24875"/>
    </ligand>
</feature>
<evidence type="ECO:0000250" key="1"/>
<evidence type="ECO:0000305" key="2"/>
<sequence>MNKPYTKPDYEQELRRAGVRITRPRRIILNILNETEDHPDALEIFRRAVEEDDSISLSTVYRTIKLLEERGAIHRHAFAGGPSRFEQASGAHHDHIIDMDSGDVVEFHSDKIEKLQEEIARSLGFEIVHHRLELYCKKLKS</sequence>
<comment type="function">
    <text evidence="1">Acts as a global negative controlling element, employing Fe(2+) as a cofactor to bind the operator of the repressed genes.</text>
</comment>
<comment type="subunit">
    <text evidence="1">Homodimer.</text>
</comment>
<comment type="subcellular location">
    <subcellularLocation>
        <location evidence="1">Cytoplasm</location>
    </subcellularLocation>
</comment>
<comment type="similarity">
    <text evidence="2">Belongs to the Fur family.</text>
</comment>
<keyword id="KW-0963">Cytoplasm</keyword>
<keyword id="KW-0238">DNA-binding</keyword>
<keyword id="KW-0408">Iron</keyword>
<keyword id="KW-0479">Metal-binding</keyword>
<keyword id="KW-0678">Repressor</keyword>
<keyword id="KW-0804">Transcription</keyword>
<keyword id="KW-0805">Transcription regulation</keyword>
<keyword id="KW-0862">Zinc</keyword>
<accession>Q8FZ45</accession>
<accession>G0K6R7</accession>
<protein>
    <recommendedName>
        <fullName>Ferric uptake regulation protein</fullName>
        <shortName>Ferric uptake regulator</shortName>
    </recommendedName>
</protein>
<organism>
    <name type="scientific">Brucella suis biovar 1 (strain 1330)</name>
    <dbReference type="NCBI Taxonomy" id="204722"/>
    <lineage>
        <taxon>Bacteria</taxon>
        <taxon>Pseudomonadati</taxon>
        <taxon>Pseudomonadota</taxon>
        <taxon>Alphaproteobacteria</taxon>
        <taxon>Hyphomicrobiales</taxon>
        <taxon>Brucellaceae</taxon>
        <taxon>Brucella/Ochrobactrum group</taxon>
        <taxon>Brucella</taxon>
    </lineage>
</organism>
<name>FUR_BRUSU</name>